<sequence>MEFDVKDLSLAEEGLKRIEWAEMDMPVLRQIRERFSKEKPLKGKKISACLHVTTETANLMRTLKEGGAEVYLTASNPLSTQDDVAAALVKYFEIPVFAIRGEDRETYYKHLRAVIEKEPDVVIDDGADLISTLHKEYPGLAEKVLGGMEETTTGVIRLRAMAEQGVLKFPIIAVNDAYTKHMFDNRYGTGQSTIDGILRATNRLLAGSYFVVAGYGWCGKGVAQRARGMGAIVIVTEVDPIKALEARMDGFLVMPMEEAAKLGDFFVTVTGNIHVIRREHFEVMKDGAIVANSGHFNVEIDIPALEEMAVEKREIRKEVTEYKLKDGRRIYLLAEGRLVNLAAAEGHPASVMDMSFSNQALSAEYIVKHHKELEKKVYRVPREIDEAVARLKLNALGIKIDELTEEQKKYLSSWEMGT</sequence>
<protein>
    <recommendedName>
        <fullName evidence="1">Adenosylhomocysteinase</fullName>
        <ecNumber evidence="1">3.13.2.1</ecNumber>
    </recommendedName>
    <alternativeName>
        <fullName evidence="1">S-adenosyl-L-homocysteine hydrolase</fullName>
        <shortName evidence="1">AdoHcyase</shortName>
    </alternativeName>
</protein>
<name>SAHH_AQUAE</name>
<reference key="1">
    <citation type="journal article" date="1998" name="Nature">
        <title>The complete genome of the hyperthermophilic bacterium Aquifex aeolicus.</title>
        <authorList>
            <person name="Deckert G."/>
            <person name="Warren P.V."/>
            <person name="Gaasterland T."/>
            <person name="Young W.G."/>
            <person name="Lenox A.L."/>
            <person name="Graham D.E."/>
            <person name="Overbeek R."/>
            <person name="Snead M.A."/>
            <person name="Keller M."/>
            <person name="Aujay M."/>
            <person name="Huber R."/>
            <person name="Feldman R.A."/>
            <person name="Short J.M."/>
            <person name="Olsen G.J."/>
            <person name="Swanson R.V."/>
        </authorList>
    </citation>
    <scope>NUCLEOTIDE SEQUENCE [LARGE SCALE GENOMIC DNA]</scope>
    <source>
        <strain>VF5</strain>
    </source>
</reference>
<gene>
    <name evidence="1" type="primary">ahcY</name>
    <name type="synonym">sahH</name>
    <name type="ordered locus">aq_1180</name>
</gene>
<dbReference type="EC" id="3.13.2.1" evidence="1"/>
<dbReference type="EMBL" id="AE000657">
    <property type="protein sequence ID" value="AAC07197.1"/>
    <property type="molecule type" value="Genomic_DNA"/>
</dbReference>
<dbReference type="PIR" id="E70401">
    <property type="entry name" value="E70401"/>
</dbReference>
<dbReference type="RefSeq" id="NP_213804.1">
    <property type="nucleotide sequence ID" value="NC_000918.1"/>
</dbReference>
<dbReference type="RefSeq" id="WP_010880742.1">
    <property type="nucleotide sequence ID" value="NC_000918.1"/>
</dbReference>
<dbReference type="SMR" id="O67240"/>
<dbReference type="STRING" id="224324.aq_1180"/>
<dbReference type="EnsemblBacteria" id="AAC07197">
    <property type="protein sequence ID" value="AAC07197"/>
    <property type="gene ID" value="aq_1180"/>
</dbReference>
<dbReference type="KEGG" id="aae:aq_1180"/>
<dbReference type="PATRIC" id="fig|224324.8.peg.917"/>
<dbReference type="eggNOG" id="COG0499">
    <property type="taxonomic scope" value="Bacteria"/>
</dbReference>
<dbReference type="HOGENOM" id="CLU_025194_2_1_0"/>
<dbReference type="InParanoid" id="O67240"/>
<dbReference type="OrthoDB" id="9802717at2"/>
<dbReference type="UniPathway" id="UPA00314">
    <property type="reaction ID" value="UER00076"/>
</dbReference>
<dbReference type="Proteomes" id="UP000000798">
    <property type="component" value="Chromosome"/>
</dbReference>
<dbReference type="GO" id="GO:0005829">
    <property type="term" value="C:cytosol"/>
    <property type="evidence" value="ECO:0000318"/>
    <property type="project" value="GO_Central"/>
</dbReference>
<dbReference type="GO" id="GO:0004013">
    <property type="term" value="F:adenosylhomocysteinase activity"/>
    <property type="evidence" value="ECO:0000318"/>
    <property type="project" value="GO_Central"/>
</dbReference>
<dbReference type="GO" id="GO:0071269">
    <property type="term" value="P:L-homocysteine biosynthetic process"/>
    <property type="evidence" value="ECO:0007669"/>
    <property type="project" value="UniProtKB-UniRule"/>
</dbReference>
<dbReference type="GO" id="GO:0006730">
    <property type="term" value="P:one-carbon metabolic process"/>
    <property type="evidence" value="ECO:0007669"/>
    <property type="project" value="UniProtKB-KW"/>
</dbReference>
<dbReference type="GO" id="GO:0033353">
    <property type="term" value="P:S-adenosylmethionine cycle"/>
    <property type="evidence" value="ECO:0000318"/>
    <property type="project" value="GO_Central"/>
</dbReference>
<dbReference type="CDD" id="cd00401">
    <property type="entry name" value="SAHH"/>
    <property type="match status" value="1"/>
</dbReference>
<dbReference type="FunFam" id="3.40.50.720:FF:000004">
    <property type="entry name" value="Adenosylhomocysteinase"/>
    <property type="match status" value="1"/>
</dbReference>
<dbReference type="Gene3D" id="3.40.50.1480">
    <property type="entry name" value="Adenosylhomocysteinase-like"/>
    <property type="match status" value="1"/>
</dbReference>
<dbReference type="Gene3D" id="3.40.50.720">
    <property type="entry name" value="NAD(P)-binding Rossmann-like Domain"/>
    <property type="match status" value="1"/>
</dbReference>
<dbReference type="HAMAP" id="MF_00563">
    <property type="entry name" value="AdoHcyase"/>
    <property type="match status" value="1"/>
</dbReference>
<dbReference type="InterPro" id="IPR042172">
    <property type="entry name" value="Adenosylhomocyst_ase-like_sf"/>
</dbReference>
<dbReference type="InterPro" id="IPR000043">
    <property type="entry name" value="Adenosylhomocysteinase-like"/>
</dbReference>
<dbReference type="InterPro" id="IPR015878">
    <property type="entry name" value="Ado_hCys_hydrolase_NAD-bd"/>
</dbReference>
<dbReference type="InterPro" id="IPR036291">
    <property type="entry name" value="NAD(P)-bd_dom_sf"/>
</dbReference>
<dbReference type="InterPro" id="IPR020082">
    <property type="entry name" value="S-Ado-L-homoCys_hydrolase_CS"/>
</dbReference>
<dbReference type="NCBIfam" id="TIGR00936">
    <property type="entry name" value="ahcY"/>
    <property type="match status" value="1"/>
</dbReference>
<dbReference type="NCBIfam" id="NF004005">
    <property type="entry name" value="PRK05476.2-3"/>
    <property type="match status" value="1"/>
</dbReference>
<dbReference type="PANTHER" id="PTHR23420">
    <property type="entry name" value="ADENOSYLHOMOCYSTEINASE"/>
    <property type="match status" value="1"/>
</dbReference>
<dbReference type="PANTHER" id="PTHR23420:SF0">
    <property type="entry name" value="ADENOSYLHOMOCYSTEINASE"/>
    <property type="match status" value="1"/>
</dbReference>
<dbReference type="Pfam" id="PF05221">
    <property type="entry name" value="AdoHcyase"/>
    <property type="match status" value="1"/>
</dbReference>
<dbReference type="Pfam" id="PF00670">
    <property type="entry name" value="AdoHcyase_NAD"/>
    <property type="match status" value="1"/>
</dbReference>
<dbReference type="PIRSF" id="PIRSF001109">
    <property type="entry name" value="Ad_hcy_hydrolase"/>
    <property type="match status" value="1"/>
</dbReference>
<dbReference type="SMART" id="SM00996">
    <property type="entry name" value="AdoHcyase"/>
    <property type="match status" value="1"/>
</dbReference>
<dbReference type="SMART" id="SM00997">
    <property type="entry name" value="AdoHcyase_NAD"/>
    <property type="match status" value="1"/>
</dbReference>
<dbReference type="SUPFAM" id="SSF52283">
    <property type="entry name" value="Formate/glycerate dehydrogenase catalytic domain-like"/>
    <property type="match status" value="1"/>
</dbReference>
<dbReference type="SUPFAM" id="SSF51735">
    <property type="entry name" value="NAD(P)-binding Rossmann-fold domains"/>
    <property type="match status" value="1"/>
</dbReference>
<dbReference type="PROSITE" id="PS00738">
    <property type="entry name" value="ADOHCYASE_1"/>
    <property type="match status" value="1"/>
</dbReference>
<dbReference type="PROSITE" id="PS00739">
    <property type="entry name" value="ADOHCYASE_2"/>
    <property type="match status" value="1"/>
</dbReference>
<evidence type="ECO:0000255" key="1">
    <source>
        <dbReference type="HAMAP-Rule" id="MF_00563"/>
    </source>
</evidence>
<proteinExistence type="inferred from homology"/>
<accession>O67240</accession>
<feature type="chain" id="PRO_0000116941" description="Adenosylhomocysteinase">
    <location>
        <begin position="1"/>
        <end position="418"/>
    </location>
</feature>
<feature type="binding site" evidence="1">
    <location>
        <position position="53"/>
    </location>
    <ligand>
        <name>substrate</name>
    </ligand>
</feature>
<feature type="binding site" evidence="1">
    <location>
        <position position="125"/>
    </location>
    <ligand>
        <name>substrate</name>
    </ligand>
</feature>
<feature type="binding site" evidence="1">
    <location>
        <position position="150"/>
    </location>
    <ligand>
        <name>substrate</name>
    </ligand>
</feature>
<feature type="binding site" evidence="1">
    <location>
        <begin position="151"/>
        <end position="153"/>
    </location>
    <ligand>
        <name>NAD(+)</name>
        <dbReference type="ChEBI" id="CHEBI:57540"/>
    </ligand>
</feature>
<feature type="binding site" evidence="1">
    <location>
        <position position="180"/>
    </location>
    <ligand>
        <name>substrate</name>
    </ligand>
</feature>
<feature type="binding site" evidence="1">
    <location>
        <position position="184"/>
    </location>
    <ligand>
        <name>substrate</name>
    </ligand>
</feature>
<feature type="binding site" evidence="1">
    <location>
        <position position="185"/>
    </location>
    <ligand>
        <name>NAD(+)</name>
        <dbReference type="ChEBI" id="CHEBI:57540"/>
    </ligand>
</feature>
<feature type="binding site" evidence="1">
    <location>
        <begin position="214"/>
        <end position="219"/>
    </location>
    <ligand>
        <name>NAD(+)</name>
        <dbReference type="ChEBI" id="CHEBI:57540"/>
    </ligand>
</feature>
<feature type="binding site" evidence="1">
    <location>
        <position position="237"/>
    </location>
    <ligand>
        <name>NAD(+)</name>
        <dbReference type="ChEBI" id="CHEBI:57540"/>
    </ligand>
</feature>
<feature type="binding site" evidence="1">
    <location>
        <position position="272"/>
    </location>
    <ligand>
        <name>NAD(+)</name>
        <dbReference type="ChEBI" id="CHEBI:57540"/>
    </ligand>
</feature>
<feature type="binding site" evidence="1">
    <location>
        <begin position="293"/>
        <end position="295"/>
    </location>
    <ligand>
        <name>NAD(+)</name>
        <dbReference type="ChEBI" id="CHEBI:57540"/>
    </ligand>
</feature>
<feature type="binding site" evidence="1">
    <location>
        <position position="340"/>
    </location>
    <ligand>
        <name>NAD(+)</name>
        <dbReference type="ChEBI" id="CHEBI:57540"/>
    </ligand>
</feature>
<organism>
    <name type="scientific">Aquifex aeolicus (strain VF5)</name>
    <dbReference type="NCBI Taxonomy" id="224324"/>
    <lineage>
        <taxon>Bacteria</taxon>
        <taxon>Pseudomonadati</taxon>
        <taxon>Aquificota</taxon>
        <taxon>Aquificia</taxon>
        <taxon>Aquificales</taxon>
        <taxon>Aquificaceae</taxon>
        <taxon>Aquifex</taxon>
    </lineage>
</organism>
<keyword id="KW-0963">Cytoplasm</keyword>
<keyword id="KW-0378">Hydrolase</keyword>
<keyword id="KW-0520">NAD</keyword>
<keyword id="KW-0554">One-carbon metabolism</keyword>
<keyword id="KW-1185">Reference proteome</keyword>
<comment type="function">
    <text evidence="1">May play a key role in the regulation of the intracellular concentration of adenosylhomocysteine.</text>
</comment>
<comment type="catalytic activity">
    <reaction evidence="1">
        <text>S-adenosyl-L-homocysteine + H2O = L-homocysteine + adenosine</text>
        <dbReference type="Rhea" id="RHEA:21708"/>
        <dbReference type="ChEBI" id="CHEBI:15377"/>
        <dbReference type="ChEBI" id="CHEBI:16335"/>
        <dbReference type="ChEBI" id="CHEBI:57856"/>
        <dbReference type="ChEBI" id="CHEBI:58199"/>
        <dbReference type="EC" id="3.13.2.1"/>
    </reaction>
</comment>
<comment type="cofactor">
    <cofactor evidence="1">
        <name>NAD(+)</name>
        <dbReference type="ChEBI" id="CHEBI:57540"/>
    </cofactor>
    <text evidence="1">Binds 1 NAD(+) per subunit.</text>
</comment>
<comment type="pathway">
    <text evidence="1">Amino-acid biosynthesis; L-homocysteine biosynthesis; L-homocysteine from S-adenosyl-L-homocysteine: step 1/1.</text>
</comment>
<comment type="subcellular location">
    <subcellularLocation>
        <location evidence="1">Cytoplasm</location>
    </subcellularLocation>
</comment>
<comment type="similarity">
    <text evidence="1">Belongs to the adenosylhomocysteinase family.</text>
</comment>